<sequence length="304" mass="34086">MLKRRHVLSMKDFSREEIDEILETAESLEPYARGKGSDILEGKILALMFFEPSTRTRMSFETAMKRLGGKTINLGSAEASSIAKGESLADTIRVVGGYADAIVIRHPKEGSARLAAEFSPVPVLNAGDGAGHHPTQTLLDLYTIKKESHLDDLSIALVGDLKYGRTVHSLAYALSLYGADIYLVSPPTLRMPEQIIGDLSRMGTRVREVSDLREVIKEVDVLYITRIQRERFPDPVEYNRVARSYSITIRDLEGVKPELRIMHPLPRVDEISPSVDETEHAVYFRQSFYGVPVRMALLKMILED</sequence>
<reference key="1">
    <citation type="submission" date="2006-10" db="EMBL/GenBank/DDBJ databases">
        <title>Complete sequence of Methanosaeta thermophila PT.</title>
        <authorList>
            <consortium name="US DOE Joint Genome Institute"/>
            <person name="Copeland A."/>
            <person name="Lucas S."/>
            <person name="Lapidus A."/>
            <person name="Barry K."/>
            <person name="Detter J.C."/>
            <person name="Glavina del Rio T."/>
            <person name="Hammon N."/>
            <person name="Israni S."/>
            <person name="Pitluck S."/>
            <person name="Chain P."/>
            <person name="Malfatti S."/>
            <person name="Shin M."/>
            <person name="Vergez L."/>
            <person name="Schmutz J."/>
            <person name="Larimer F."/>
            <person name="Land M."/>
            <person name="Hauser L."/>
            <person name="Kyrpides N."/>
            <person name="Kim E."/>
            <person name="Smith K.S."/>
            <person name="Ingram-Smith C."/>
            <person name="Richardson P."/>
        </authorList>
    </citation>
    <scope>NUCLEOTIDE SEQUENCE [LARGE SCALE GENOMIC DNA]</scope>
    <source>
        <strain>DSM 6194 / JCM 14653 / NBRC 101360 / PT</strain>
    </source>
</reference>
<keyword id="KW-0665">Pyrimidine biosynthesis</keyword>
<keyword id="KW-1185">Reference proteome</keyword>
<keyword id="KW-0808">Transferase</keyword>
<evidence type="ECO:0000255" key="1">
    <source>
        <dbReference type="HAMAP-Rule" id="MF_00001"/>
    </source>
</evidence>
<name>PYRB_METTP</name>
<gene>
    <name evidence="1" type="primary">pyrB</name>
    <name type="ordered locus">Mthe_1256</name>
</gene>
<dbReference type="EC" id="2.1.3.2" evidence="1"/>
<dbReference type="EMBL" id="CP000477">
    <property type="protein sequence ID" value="ABK15035.1"/>
    <property type="molecule type" value="Genomic_DNA"/>
</dbReference>
<dbReference type="RefSeq" id="WP_011696427.1">
    <property type="nucleotide sequence ID" value="NC_008553.1"/>
</dbReference>
<dbReference type="SMR" id="A0B8L1"/>
<dbReference type="STRING" id="349307.Mthe_1256"/>
<dbReference type="GeneID" id="4462542"/>
<dbReference type="KEGG" id="mtp:Mthe_1256"/>
<dbReference type="HOGENOM" id="CLU_043846_1_2_2"/>
<dbReference type="OrthoDB" id="7792at2157"/>
<dbReference type="UniPathway" id="UPA00070">
    <property type="reaction ID" value="UER00116"/>
</dbReference>
<dbReference type="Proteomes" id="UP000000674">
    <property type="component" value="Chromosome"/>
</dbReference>
<dbReference type="GO" id="GO:0005829">
    <property type="term" value="C:cytosol"/>
    <property type="evidence" value="ECO:0007669"/>
    <property type="project" value="TreeGrafter"/>
</dbReference>
<dbReference type="GO" id="GO:0016597">
    <property type="term" value="F:amino acid binding"/>
    <property type="evidence" value="ECO:0007669"/>
    <property type="project" value="InterPro"/>
</dbReference>
<dbReference type="GO" id="GO:0004070">
    <property type="term" value="F:aspartate carbamoyltransferase activity"/>
    <property type="evidence" value="ECO:0007669"/>
    <property type="project" value="UniProtKB-UniRule"/>
</dbReference>
<dbReference type="GO" id="GO:0006207">
    <property type="term" value="P:'de novo' pyrimidine nucleobase biosynthetic process"/>
    <property type="evidence" value="ECO:0007669"/>
    <property type="project" value="InterPro"/>
</dbReference>
<dbReference type="GO" id="GO:0044205">
    <property type="term" value="P:'de novo' UMP biosynthetic process"/>
    <property type="evidence" value="ECO:0007669"/>
    <property type="project" value="UniProtKB-UniRule"/>
</dbReference>
<dbReference type="GO" id="GO:0006520">
    <property type="term" value="P:amino acid metabolic process"/>
    <property type="evidence" value="ECO:0007669"/>
    <property type="project" value="InterPro"/>
</dbReference>
<dbReference type="FunFam" id="3.40.50.1370:FF:000001">
    <property type="entry name" value="Aspartate carbamoyltransferase"/>
    <property type="match status" value="1"/>
</dbReference>
<dbReference type="FunFam" id="3.40.50.1370:FF:000002">
    <property type="entry name" value="Aspartate carbamoyltransferase 2"/>
    <property type="match status" value="1"/>
</dbReference>
<dbReference type="Gene3D" id="3.40.50.1370">
    <property type="entry name" value="Aspartate/ornithine carbamoyltransferase"/>
    <property type="match status" value="2"/>
</dbReference>
<dbReference type="HAMAP" id="MF_00001">
    <property type="entry name" value="Asp_carb_tr"/>
    <property type="match status" value="1"/>
</dbReference>
<dbReference type="InterPro" id="IPR006132">
    <property type="entry name" value="Asp/Orn_carbamoyltranf_P-bd"/>
</dbReference>
<dbReference type="InterPro" id="IPR006130">
    <property type="entry name" value="Asp/Orn_carbamoylTrfase"/>
</dbReference>
<dbReference type="InterPro" id="IPR036901">
    <property type="entry name" value="Asp/Orn_carbamoylTrfase_sf"/>
</dbReference>
<dbReference type="InterPro" id="IPR002082">
    <property type="entry name" value="Asp_carbamoyltransf"/>
</dbReference>
<dbReference type="InterPro" id="IPR006131">
    <property type="entry name" value="Asp_carbamoyltransf_Asp/Orn-bd"/>
</dbReference>
<dbReference type="NCBIfam" id="TIGR00670">
    <property type="entry name" value="asp_carb_tr"/>
    <property type="match status" value="1"/>
</dbReference>
<dbReference type="NCBIfam" id="NF002032">
    <property type="entry name" value="PRK00856.1"/>
    <property type="match status" value="1"/>
</dbReference>
<dbReference type="PANTHER" id="PTHR45753:SF6">
    <property type="entry name" value="ASPARTATE CARBAMOYLTRANSFERASE"/>
    <property type="match status" value="1"/>
</dbReference>
<dbReference type="PANTHER" id="PTHR45753">
    <property type="entry name" value="ORNITHINE CARBAMOYLTRANSFERASE, MITOCHONDRIAL"/>
    <property type="match status" value="1"/>
</dbReference>
<dbReference type="Pfam" id="PF00185">
    <property type="entry name" value="OTCace"/>
    <property type="match status" value="1"/>
</dbReference>
<dbReference type="Pfam" id="PF02729">
    <property type="entry name" value="OTCace_N"/>
    <property type="match status" value="1"/>
</dbReference>
<dbReference type="PRINTS" id="PR00100">
    <property type="entry name" value="AOTCASE"/>
</dbReference>
<dbReference type="PRINTS" id="PR00101">
    <property type="entry name" value="ATCASE"/>
</dbReference>
<dbReference type="SUPFAM" id="SSF53671">
    <property type="entry name" value="Aspartate/ornithine carbamoyltransferase"/>
    <property type="match status" value="1"/>
</dbReference>
<dbReference type="PROSITE" id="PS00097">
    <property type="entry name" value="CARBAMOYLTRANSFERASE"/>
    <property type="match status" value="1"/>
</dbReference>
<feature type="chain" id="PRO_0000321188" description="Aspartate carbamoyltransferase catalytic subunit">
    <location>
        <begin position="1"/>
        <end position="304"/>
    </location>
</feature>
<feature type="binding site" evidence="1">
    <location>
        <position position="55"/>
    </location>
    <ligand>
        <name>carbamoyl phosphate</name>
        <dbReference type="ChEBI" id="CHEBI:58228"/>
    </ligand>
</feature>
<feature type="binding site" evidence="1">
    <location>
        <position position="56"/>
    </location>
    <ligand>
        <name>carbamoyl phosphate</name>
        <dbReference type="ChEBI" id="CHEBI:58228"/>
    </ligand>
</feature>
<feature type="binding site" evidence="1">
    <location>
        <position position="84"/>
    </location>
    <ligand>
        <name>L-aspartate</name>
        <dbReference type="ChEBI" id="CHEBI:29991"/>
    </ligand>
</feature>
<feature type="binding site" evidence="1">
    <location>
        <position position="105"/>
    </location>
    <ligand>
        <name>carbamoyl phosphate</name>
        <dbReference type="ChEBI" id="CHEBI:58228"/>
    </ligand>
</feature>
<feature type="binding site" evidence="1">
    <location>
        <position position="133"/>
    </location>
    <ligand>
        <name>carbamoyl phosphate</name>
        <dbReference type="ChEBI" id="CHEBI:58228"/>
    </ligand>
</feature>
<feature type="binding site" evidence="1">
    <location>
        <position position="136"/>
    </location>
    <ligand>
        <name>carbamoyl phosphate</name>
        <dbReference type="ChEBI" id="CHEBI:58228"/>
    </ligand>
</feature>
<feature type="binding site" evidence="1">
    <location>
        <position position="165"/>
    </location>
    <ligand>
        <name>L-aspartate</name>
        <dbReference type="ChEBI" id="CHEBI:29991"/>
    </ligand>
</feature>
<feature type="binding site" evidence="1">
    <location>
        <position position="226"/>
    </location>
    <ligand>
        <name>L-aspartate</name>
        <dbReference type="ChEBI" id="CHEBI:29991"/>
    </ligand>
</feature>
<feature type="binding site" evidence="1">
    <location>
        <position position="265"/>
    </location>
    <ligand>
        <name>carbamoyl phosphate</name>
        <dbReference type="ChEBI" id="CHEBI:58228"/>
    </ligand>
</feature>
<feature type="binding site" evidence="1">
    <location>
        <position position="266"/>
    </location>
    <ligand>
        <name>carbamoyl phosphate</name>
        <dbReference type="ChEBI" id="CHEBI:58228"/>
    </ligand>
</feature>
<protein>
    <recommendedName>
        <fullName evidence="1">Aspartate carbamoyltransferase catalytic subunit</fullName>
        <ecNumber evidence="1">2.1.3.2</ecNumber>
    </recommendedName>
    <alternativeName>
        <fullName evidence="1">Aspartate transcarbamylase</fullName>
        <shortName evidence="1">ATCase</shortName>
    </alternativeName>
</protein>
<accession>A0B8L1</accession>
<comment type="function">
    <text evidence="1">Catalyzes the condensation of carbamoyl phosphate and aspartate to form carbamoyl aspartate and inorganic phosphate, the committed step in the de novo pyrimidine nucleotide biosynthesis pathway.</text>
</comment>
<comment type="catalytic activity">
    <reaction evidence="1">
        <text>carbamoyl phosphate + L-aspartate = N-carbamoyl-L-aspartate + phosphate + H(+)</text>
        <dbReference type="Rhea" id="RHEA:20013"/>
        <dbReference type="ChEBI" id="CHEBI:15378"/>
        <dbReference type="ChEBI" id="CHEBI:29991"/>
        <dbReference type="ChEBI" id="CHEBI:32814"/>
        <dbReference type="ChEBI" id="CHEBI:43474"/>
        <dbReference type="ChEBI" id="CHEBI:58228"/>
        <dbReference type="EC" id="2.1.3.2"/>
    </reaction>
</comment>
<comment type="pathway">
    <text evidence="1">Pyrimidine metabolism; UMP biosynthesis via de novo pathway; (S)-dihydroorotate from bicarbonate: step 2/3.</text>
</comment>
<comment type="subunit">
    <text evidence="1">Heterooligomer of catalytic and regulatory chains.</text>
</comment>
<comment type="similarity">
    <text evidence="1">Belongs to the aspartate/ornithine carbamoyltransferase superfamily. ATCase family.</text>
</comment>
<organism>
    <name type="scientific">Methanothrix thermoacetophila (strain DSM 6194 / JCM 14653 / NBRC 101360 / PT)</name>
    <name type="common">Methanosaeta thermophila</name>
    <dbReference type="NCBI Taxonomy" id="349307"/>
    <lineage>
        <taxon>Archaea</taxon>
        <taxon>Methanobacteriati</taxon>
        <taxon>Methanobacteriota</taxon>
        <taxon>Stenosarchaea group</taxon>
        <taxon>Methanomicrobia</taxon>
        <taxon>Methanotrichales</taxon>
        <taxon>Methanotrichaceae</taxon>
        <taxon>Methanothrix</taxon>
    </lineage>
</organism>
<proteinExistence type="inferred from homology"/>